<reference key="1">
    <citation type="journal article" date="2001" name="Science">
        <title>Mechanisms of evolution in Rickettsia conorii and R. prowazekii.</title>
        <authorList>
            <person name="Ogata H."/>
            <person name="Audic S."/>
            <person name="Renesto-Audiffren P."/>
            <person name="Fournier P.-E."/>
            <person name="Barbe V."/>
            <person name="Samson D."/>
            <person name="Roux V."/>
            <person name="Cossart P."/>
            <person name="Weissenbach J."/>
            <person name="Claverie J.-M."/>
            <person name="Raoult D."/>
        </authorList>
    </citation>
    <scope>NUCLEOTIDE SEQUENCE [LARGE SCALE GENOMIC DNA]</scope>
    <source>
        <strain>ATCC VR-613 / Malish 7</strain>
    </source>
</reference>
<name>Y007_RICCN</name>
<accession>Q92JR0</accession>
<feature type="chain" id="PRO_0000101431" description="Uncharacterized protein RC0007">
    <location>
        <begin position="1"/>
        <end position="93"/>
    </location>
</feature>
<protein>
    <recommendedName>
        <fullName>Uncharacterized protein RC0007</fullName>
    </recommendedName>
</protein>
<sequence>MLQLNIIRRIKMTKSITTSIRLEINLSKKLEKATYDLHREKSWIISEAYLKQLENSDLAKEAKRQSLLASKENNPDANLWLKHNEESWLDEWK</sequence>
<dbReference type="EMBL" id="AE006914">
    <property type="protein sequence ID" value="AAL02545.1"/>
    <property type="molecule type" value="Genomic_DNA"/>
</dbReference>
<dbReference type="PIR" id="G97700">
    <property type="entry name" value="G97700"/>
</dbReference>
<dbReference type="SMR" id="Q92JR0"/>
<dbReference type="KEGG" id="rco:RC0007"/>
<dbReference type="HOGENOM" id="CLU_2540424_0_0_5"/>
<dbReference type="Proteomes" id="UP000000816">
    <property type="component" value="Chromosome"/>
</dbReference>
<proteinExistence type="predicted"/>
<gene>
    <name type="ordered locus">RC0007</name>
</gene>
<organism>
    <name type="scientific">Rickettsia conorii (strain ATCC VR-613 / Malish 7)</name>
    <dbReference type="NCBI Taxonomy" id="272944"/>
    <lineage>
        <taxon>Bacteria</taxon>
        <taxon>Pseudomonadati</taxon>
        <taxon>Pseudomonadota</taxon>
        <taxon>Alphaproteobacteria</taxon>
        <taxon>Rickettsiales</taxon>
        <taxon>Rickettsiaceae</taxon>
        <taxon>Rickettsieae</taxon>
        <taxon>Rickettsia</taxon>
        <taxon>spotted fever group</taxon>
    </lineage>
</organism>